<reference key="1">
    <citation type="submission" date="2000-05" db="EMBL/GenBank/DDBJ databases">
        <title>Evolution of the TM9 super family of membrane spanning proteins.</title>
        <authorList>
            <person name="Warner S.J."/>
            <person name="Lomax M.I."/>
        </authorList>
    </citation>
    <scope>NUCLEOTIDE SEQUENCE [MRNA]</scope>
</reference>
<reference key="2">
    <citation type="submission" date="1999-06" db="EMBL/GenBank/DDBJ databases">
        <authorList>
            <person name="Gu Y."/>
            <person name="Peng Y."/>
            <person name="Li Y."/>
            <person name="Fu S."/>
            <person name="Gu J."/>
            <person name="Gu W."/>
            <person name="Jiang C."/>
            <person name="Yu Y."/>
            <person name="Han Z."/>
            <person name="Wang Y."/>
            <person name="Chen Z."/>
            <person name="Fu G."/>
        </authorList>
    </citation>
    <scope>NUCLEOTIDE SEQUENCE [MRNA]</scope>
    <source>
        <tissue>Adrenal gland</tissue>
    </source>
</reference>
<reference key="3">
    <citation type="journal article" date="2004" name="Nature">
        <title>The DNA sequence and comparative analysis of human chromosome 10.</title>
        <authorList>
            <person name="Deloukas P."/>
            <person name="Earthrowl M.E."/>
            <person name="Grafham D.V."/>
            <person name="Rubenfield M."/>
            <person name="French L."/>
            <person name="Steward C.A."/>
            <person name="Sims S.K."/>
            <person name="Jones M.C."/>
            <person name="Searle S."/>
            <person name="Scott C."/>
            <person name="Howe K."/>
            <person name="Hunt S.E."/>
            <person name="Andrews T.D."/>
            <person name="Gilbert J.G.R."/>
            <person name="Swarbreck D."/>
            <person name="Ashurst J.L."/>
            <person name="Taylor A."/>
            <person name="Battles J."/>
            <person name="Bird C.P."/>
            <person name="Ainscough R."/>
            <person name="Almeida J.P."/>
            <person name="Ashwell R.I.S."/>
            <person name="Ambrose K.D."/>
            <person name="Babbage A.K."/>
            <person name="Bagguley C.L."/>
            <person name="Bailey J."/>
            <person name="Banerjee R."/>
            <person name="Bates K."/>
            <person name="Beasley H."/>
            <person name="Bray-Allen S."/>
            <person name="Brown A.J."/>
            <person name="Brown J.Y."/>
            <person name="Burford D.C."/>
            <person name="Burrill W."/>
            <person name="Burton J."/>
            <person name="Cahill P."/>
            <person name="Camire D."/>
            <person name="Carter N.P."/>
            <person name="Chapman J.C."/>
            <person name="Clark S.Y."/>
            <person name="Clarke G."/>
            <person name="Clee C.M."/>
            <person name="Clegg S."/>
            <person name="Corby N."/>
            <person name="Coulson A."/>
            <person name="Dhami P."/>
            <person name="Dutta I."/>
            <person name="Dunn M."/>
            <person name="Faulkner L."/>
            <person name="Frankish A."/>
            <person name="Frankland J.A."/>
            <person name="Garner P."/>
            <person name="Garnett J."/>
            <person name="Gribble S."/>
            <person name="Griffiths C."/>
            <person name="Grocock R."/>
            <person name="Gustafson E."/>
            <person name="Hammond S."/>
            <person name="Harley J.L."/>
            <person name="Hart E."/>
            <person name="Heath P.D."/>
            <person name="Ho T.P."/>
            <person name="Hopkins B."/>
            <person name="Horne J."/>
            <person name="Howden P.J."/>
            <person name="Huckle E."/>
            <person name="Hynds C."/>
            <person name="Johnson C."/>
            <person name="Johnson D."/>
            <person name="Kana A."/>
            <person name="Kay M."/>
            <person name="Kimberley A.M."/>
            <person name="Kershaw J.K."/>
            <person name="Kokkinaki M."/>
            <person name="Laird G.K."/>
            <person name="Lawlor S."/>
            <person name="Lee H.M."/>
            <person name="Leongamornlert D.A."/>
            <person name="Laird G."/>
            <person name="Lloyd C."/>
            <person name="Lloyd D.M."/>
            <person name="Loveland J."/>
            <person name="Lovell J."/>
            <person name="McLaren S."/>
            <person name="McLay K.E."/>
            <person name="McMurray A."/>
            <person name="Mashreghi-Mohammadi M."/>
            <person name="Matthews L."/>
            <person name="Milne S."/>
            <person name="Nickerson T."/>
            <person name="Nguyen M."/>
            <person name="Overton-Larty E."/>
            <person name="Palmer S.A."/>
            <person name="Pearce A.V."/>
            <person name="Peck A.I."/>
            <person name="Pelan S."/>
            <person name="Phillimore B."/>
            <person name="Porter K."/>
            <person name="Rice C.M."/>
            <person name="Rogosin A."/>
            <person name="Ross M.T."/>
            <person name="Sarafidou T."/>
            <person name="Sehra H.K."/>
            <person name="Shownkeen R."/>
            <person name="Skuce C.D."/>
            <person name="Smith M."/>
            <person name="Standring L."/>
            <person name="Sycamore N."/>
            <person name="Tester J."/>
            <person name="Thorpe A."/>
            <person name="Torcasso W."/>
            <person name="Tracey A."/>
            <person name="Tromans A."/>
            <person name="Tsolas J."/>
            <person name="Wall M."/>
            <person name="Walsh J."/>
            <person name="Wang H."/>
            <person name="Weinstock K."/>
            <person name="West A.P."/>
            <person name="Willey D.L."/>
            <person name="Whitehead S.L."/>
            <person name="Wilming L."/>
            <person name="Wray P.W."/>
            <person name="Young L."/>
            <person name="Chen Y."/>
            <person name="Lovering R.C."/>
            <person name="Moschonas N.K."/>
            <person name="Siebert R."/>
            <person name="Fechtel K."/>
            <person name="Bentley D."/>
            <person name="Durbin R.M."/>
            <person name="Hubbard T."/>
            <person name="Doucette-Stamm L."/>
            <person name="Beck S."/>
            <person name="Smith D.R."/>
            <person name="Rogers J."/>
        </authorList>
    </citation>
    <scope>NUCLEOTIDE SEQUENCE [LARGE SCALE GENOMIC DNA]</scope>
</reference>
<reference key="4">
    <citation type="submission" date="2005-09" db="EMBL/GenBank/DDBJ databases">
        <authorList>
            <person name="Mural R.J."/>
            <person name="Istrail S."/>
            <person name="Sutton G.G."/>
            <person name="Florea L."/>
            <person name="Halpern A.L."/>
            <person name="Mobarry C.M."/>
            <person name="Lippert R."/>
            <person name="Walenz B."/>
            <person name="Shatkay H."/>
            <person name="Dew I."/>
            <person name="Miller J.R."/>
            <person name="Flanigan M.J."/>
            <person name="Edwards N.J."/>
            <person name="Bolanos R."/>
            <person name="Fasulo D."/>
            <person name="Halldorsson B.V."/>
            <person name="Hannenhalli S."/>
            <person name="Turner R."/>
            <person name="Yooseph S."/>
            <person name="Lu F."/>
            <person name="Nusskern D.R."/>
            <person name="Shue B.C."/>
            <person name="Zheng X.H."/>
            <person name="Zhong F."/>
            <person name="Delcher A.L."/>
            <person name="Huson D.H."/>
            <person name="Kravitz S.A."/>
            <person name="Mouchard L."/>
            <person name="Reinert K."/>
            <person name="Remington K.A."/>
            <person name="Clark A.G."/>
            <person name="Waterman M.S."/>
            <person name="Eichler E.E."/>
            <person name="Adams M.D."/>
            <person name="Hunkapiller M.W."/>
            <person name="Myers E.W."/>
            <person name="Venter J.C."/>
        </authorList>
    </citation>
    <scope>NUCLEOTIDE SEQUENCE [LARGE SCALE GENOMIC DNA]</scope>
</reference>
<reference key="5">
    <citation type="journal article" date="2004" name="Genome Res.">
        <title>The status, quality, and expansion of the NIH full-length cDNA project: the Mammalian Gene Collection (MGC).</title>
        <authorList>
            <consortium name="The MGC Project Team"/>
        </authorList>
    </citation>
    <scope>NUCLEOTIDE SEQUENCE [LARGE SCALE MRNA]</scope>
</reference>
<reference key="6">
    <citation type="submission" date="1998-12" db="EMBL/GenBank/DDBJ databases">
        <title>The iodocyanopindolol and SM-11044 binding protein (SMBP) belongs to the emerging family of MP70 multispanning membrane proteins.</title>
        <authorList>
            <person name="Sugasawa T."/>
            <person name="Lenzen G."/>
            <person name="Simon S."/>
            <person name="Hidaka J."/>
            <person name="Cahen A."/>
            <person name="Guillaume J.L."/>
            <person name="Camoin L."/>
            <person name="Nahmias C."/>
            <person name="Strosberg A.D."/>
        </authorList>
    </citation>
    <scope>NUCLEOTIDE SEQUENCE [MRNA] OF 12-589</scope>
    <source>
        <tissue>Skeletal muscle</tissue>
    </source>
</reference>
<reference key="7">
    <citation type="journal article" date="2003" name="Genome Res.">
        <title>The secreted protein discovery initiative (SPDI), a large-scale effort to identify novel human secreted and transmembrane proteins: a bioinformatics assessment.</title>
        <authorList>
            <person name="Clark H.F."/>
            <person name="Gurney A.L."/>
            <person name="Abaya E."/>
            <person name="Baker K."/>
            <person name="Baldwin D.T."/>
            <person name="Brush J."/>
            <person name="Chen J."/>
            <person name="Chow B."/>
            <person name="Chui C."/>
            <person name="Crowley C."/>
            <person name="Currell B."/>
            <person name="Deuel B."/>
            <person name="Dowd P."/>
            <person name="Eaton D."/>
            <person name="Foster J.S."/>
            <person name="Grimaldi C."/>
            <person name="Gu Q."/>
            <person name="Hass P.E."/>
            <person name="Heldens S."/>
            <person name="Huang A."/>
            <person name="Kim H.S."/>
            <person name="Klimowski L."/>
            <person name="Jin Y."/>
            <person name="Johnson S."/>
            <person name="Lee J."/>
            <person name="Lewis L."/>
            <person name="Liao D."/>
            <person name="Mark M.R."/>
            <person name="Robbie E."/>
            <person name="Sanchez C."/>
            <person name="Schoenfeld J."/>
            <person name="Seshagiri S."/>
            <person name="Simmons L."/>
            <person name="Singh J."/>
            <person name="Smith V."/>
            <person name="Stinson J."/>
            <person name="Vagts A."/>
            <person name="Vandlen R.L."/>
            <person name="Watanabe C."/>
            <person name="Wieand D."/>
            <person name="Woods K."/>
            <person name="Xie M.-H."/>
            <person name="Yansura D.G."/>
            <person name="Yi S."/>
            <person name="Yu G."/>
            <person name="Yuan J."/>
            <person name="Zhang M."/>
            <person name="Zhang Z."/>
            <person name="Goddard A.D."/>
            <person name="Wood W.I."/>
            <person name="Godowski P.J."/>
            <person name="Gray A.M."/>
        </authorList>
    </citation>
    <scope>NUCLEOTIDE SEQUENCE [LARGE SCALE MRNA] OF 39-589</scope>
</reference>
<reference key="8">
    <citation type="journal article" date="2004" name="Nat. Genet.">
        <title>Complete sequencing and characterization of 21,243 full-length human cDNAs.</title>
        <authorList>
            <person name="Ota T."/>
            <person name="Suzuki Y."/>
            <person name="Nishikawa T."/>
            <person name="Otsuki T."/>
            <person name="Sugiyama T."/>
            <person name="Irie R."/>
            <person name="Wakamatsu A."/>
            <person name="Hayashi K."/>
            <person name="Sato H."/>
            <person name="Nagai K."/>
            <person name="Kimura K."/>
            <person name="Makita H."/>
            <person name="Sekine M."/>
            <person name="Obayashi M."/>
            <person name="Nishi T."/>
            <person name="Shibahara T."/>
            <person name="Tanaka T."/>
            <person name="Ishii S."/>
            <person name="Yamamoto J."/>
            <person name="Saito K."/>
            <person name="Kawai Y."/>
            <person name="Isono Y."/>
            <person name="Nakamura Y."/>
            <person name="Nagahari K."/>
            <person name="Murakami K."/>
            <person name="Yasuda T."/>
            <person name="Iwayanagi T."/>
            <person name="Wagatsuma M."/>
            <person name="Shiratori A."/>
            <person name="Sudo H."/>
            <person name="Hosoiri T."/>
            <person name="Kaku Y."/>
            <person name="Kodaira H."/>
            <person name="Kondo H."/>
            <person name="Sugawara M."/>
            <person name="Takahashi M."/>
            <person name="Kanda K."/>
            <person name="Yokoi T."/>
            <person name="Furuya T."/>
            <person name="Kikkawa E."/>
            <person name="Omura Y."/>
            <person name="Abe K."/>
            <person name="Kamihara K."/>
            <person name="Katsuta N."/>
            <person name="Sato K."/>
            <person name="Tanikawa M."/>
            <person name="Yamazaki M."/>
            <person name="Ninomiya K."/>
            <person name="Ishibashi T."/>
            <person name="Yamashita H."/>
            <person name="Murakawa K."/>
            <person name="Fujimori K."/>
            <person name="Tanai H."/>
            <person name="Kimata M."/>
            <person name="Watanabe M."/>
            <person name="Hiraoka S."/>
            <person name="Chiba Y."/>
            <person name="Ishida S."/>
            <person name="Ono Y."/>
            <person name="Takiguchi S."/>
            <person name="Watanabe S."/>
            <person name="Yosida M."/>
            <person name="Hotuta T."/>
            <person name="Kusano J."/>
            <person name="Kanehori K."/>
            <person name="Takahashi-Fujii A."/>
            <person name="Hara H."/>
            <person name="Tanase T.-O."/>
            <person name="Nomura Y."/>
            <person name="Togiya S."/>
            <person name="Komai F."/>
            <person name="Hara R."/>
            <person name="Takeuchi K."/>
            <person name="Arita M."/>
            <person name="Imose N."/>
            <person name="Musashino K."/>
            <person name="Yuuki H."/>
            <person name="Oshima A."/>
            <person name="Sasaki N."/>
            <person name="Aotsuka S."/>
            <person name="Yoshikawa Y."/>
            <person name="Matsunawa H."/>
            <person name="Ichihara T."/>
            <person name="Shiohata N."/>
            <person name="Sano S."/>
            <person name="Moriya S."/>
            <person name="Momiyama H."/>
            <person name="Satoh N."/>
            <person name="Takami S."/>
            <person name="Terashima Y."/>
            <person name="Suzuki O."/>
            <person name="Nakagawa S."/>
            <person name="Senoh A."/>
            <person name="Mizoguchi H."/>
            <person name="Goto Y."/>
            <person name="Shimizu F."/>
            <person name="Wakebe H."/>
            <person name="Hishigaki H."/>
            <person name="Watanabe T."/>
            <person name="Sugiyama A."/>
            <person name="Takemoto M."/>
            <person name="Kawakami B."/>
            <person name="Yamazaki M."/>
            <person name="Watanabe K."/>
            <person name="Kumagai A."/>
            <person name="Itakura S."/>
            <person name="Fukuzumi Y."/>
            <person name="Fujimori Y."/>
            <person name="Komiyama M."/>
            <person name="Tashiro H."/>
            <person name="Tanigami A."/>
            <person name="Fujiwara T."/>
            <person name="Ono T."/>
            <person name="Yamada K."/>
            <person name="Fujii Y."/>
            <person name="Ozaki K."/>
            <person name="Hirao M."/>
            <person name="Ohmori Y."/>
            <person name="Kawabata A."/>
            <person name="Hikiji T."/>
            <person name="Kobatake N."/>
            <person name="Inagaki H."/>
            <person name="Ikema Y."/>
            <person name="Okamoto S."/>
            <person name="Okitani R."/>
            <person name="Kawakami T."/>
            <person name="Noguchi S."/>
            <person name="Itoh T."/>
            <person name="Shigeta K."/>
            <person name="Senba T."/>
            <person name="Matsumura K."/>
            <person name="Nakajima Y."/>
            <person name="Mizuno T."/>
            <person name="Morinaga M."/>
            <person name="Sasaki M."/>
            <person name="Togashi T."/>
            <person name="Oyama M."/>
            <person name="Hata H."/>
            <person name="Watanabe M."/>
            <person name="Komatsu T."/>
            <person name="Mizushima-Sugano J."/>
            <person name="Satoh T."/>
            <person name="Shirai Y."/>
            <person name="Takahashi Y."/>
            <person name="Nakagawa K."/>
            <person name="Okumura K."/>
            <person name="Nagase T."/>
            <person name="Nomura N."/>
            <person name="Kikuchi H."/>
            <person name="Masuho Y."/>
            <person name="Yamashita R."/>
            <person name="Nakai K."/>
            <person name="Yada T."/>
            <person name="Nakamura Y."/>
            <person name="Ohara O."/>
            <person name="Isogai T."/>
            <person name="Sugano S."/>
        </authorList>
    </citation>
    <scope>NUCLEOTIDE SEQUENCE [LARGE SCALE MRNA] OF 128-589</scope>
</reference>
<reference key="9">
    <citation type="journal article" date="2009" name="J. Proteome Res.">
        <title>Glycoproteomics analysis of human liver tissue by combination of multiple enzyme digestion and hydrazide chemistry.</title>
        <authorList>
            <person name="Chen R."/>
            <person name="Jiang X."/>
            <person name="Sun D."/>
            <person name="Han G."/>
            <person name="Wang F."/>
            <person name="Ye M."/>
            <person name="Wang L."/>
            <person name="Zou H."/>
        </authorList>
    </citation>
    <scope>GLYCOSYLATION [LARGE SCALE ANALYSIS] AT ASN-174</scope>
    <source>
        <tissue>Liver</tissue>
    </source>
</reference>
<reference key="10">
    <citation type="journal article" date="2009" name="Nat. Biotechnol.">
        <title>Mass-spectrometric identification and relative quantification of N-linked cell surface glycoproteins.</title>
        <authorList>
            <person name="Wollscheid B."/>
            <person name="Bausch-Fluck D."/>
            <person name="Henderson C."/>
            <person name="O'Brien R."/>
            <person name="Bibel M."/>
            <person name="Schiess R."/>
            <person name="Aebersold R."/>
            <person name="Watts J.D."/>
        </authorList>
    </citation>
    <scope>GLYCOSYLATION [LARGE SCALE ANALYSIS] AT ASN-174</scope>
    <source>
        <tissue>Leukemic T-cell</tissue>
    </source>
</reference>
<reference key="11">
    <citation type="journal article" date="2014" name="J. Proteomics">
        <title>An enzyme assisted RP-RPLC approach for in-depth analysis of human liver phosphoproteome.</title>
        <authorList>
            <person name="Bian Y."/>
            <person name="Song C."/>
            <person name="Cheng K."/>
            <person name="Dong M."/>
            <person name="Wang F."/>
            <person name="Huang J."/>
            <person name="Sun D."/>
            <person name="Wang L."/>
            <person name="Ye M."/>
            <person name="Zou H."/>
        </authorList>
    </citation>
    <scope>IDENTIFICATION BY MASS SPECTROMETRY [LARGE SCALE ANALYSIS]</scope>
    <source>
        <tissue>Liver</tissue>
    </source>
</reference>
<reference key="12">
    <citation type="journal article" date="2015" name="Proteomics">
        <title>N-terminome analysis of the human mitochondrial proteome.</title>
        <authorList>
            <person name="Vaca Jacome A.S."/>
            <person name="Rabilloud T."/>
            <person name="Schaeffer-Reiss C."/>
            <person name="Rompais M."/>
            <person name="Ayoub D."/>
            <person name="Lane L."/>
            <person name="Bairoch A."/>
            <person name="Van Dorsselaer A."/>
            <person name="Carapito C."/>
        </authorList>
    </citation>
    <scope>IDENTIFICATION BY MASS SPECTROMETRY [LARGE SCALE ANALYSIS]</scope>
</reference>
<organism>
    <name type="scientific">Homo sapiens</name>
    <name type="common">Human</name>
    <dbReference type="NCBI Taxonomy" id="9606"/>
    <lineage>
        <taxon>Eukaryota</taxon>
        <taxon>Metazoa</taxon>
        <taxon>Chordata</taxon>
        <taxon>Craniata</taxon>
        <taxon>Vertebrata</taxon>
        <taxon>Euteleostomi</taxon>
        <taxon>Mammalia</taxon>
        <taxon>Eutheria</taxon>
        <taxon>Euarchontoglires</taxon>
        <taxon>Primates</taxon>
        <taxon>Haplorrhini</taxon>
        <taxon>Catarrhini</taxon>
        <taxon>Hominidae</taxon>
        <taxon>Homo</taxon>
    </lineage>
</organism>
<accession>Q9HD45</accession>
<accession>Q5TB57</accession>
<accession>Q6UWE7</accession>
<accession>Q9NWL8</accession>
<accession>Q9P0G9</accession>
<accession>Q9UHW8</accession>
<keyword id="KW-0325">Glycoprotein</keyword>
<keyword id="KW-0472">Membrane</keyword>
<keyword id="KW-1267">Proteomics identification</keyword>
<keyword id="KW-1185">Reference proteome</keyword>
<keyword id="KW-0732">Signal</keyword>
<keyword id="KW-0812">Transmembrane</keyword>
<keyword id="KW-1133">Transmembrane helix</keyword>
<feature type="signal peptide" evidence="1">
    <location>
        <begin position="1"/>
        <end position="28"/>
    </location>
</feature>
<feature type="chain" id="PRO_0000034369" description="Transmembrane 9 superfamily member 3">
    <location>
        <begin position="29"/>
        <end position="589"/>
    </location>
</feature>
<feature type="transmembrane region" description="Helical" evidence="1">
    <location>
        <begin position="224"/>
        <end position="244"/>
    </location>
</feature>
<feature type="transmembrane region" description="Helical" evidence="1">
    <location>
        <begin position="294"/>
        <end position="314"/>
    </location>
</feature>
<feature type="transmembrane region" description="Helical" evidence="1">
    <location>
        <begin position="328"/>
        <end position="348"/>
    </location>
</feature>
<feature type="transmembrane region" description="Helical" evidence="1">
    <location>
        <begin position="360"/>
        <end position="380"/>
    </location>
</feature>
<feature type="transmembrane region" description="Helical" evidence="1">
    <location>
        <begin position="389"/>
        <end position="409"/>
    </location>
</feature>
<feature type="transmembrane region" description="Helical" evidence="1">
    <location>
        <begin position="449"/>
        <end position="469"/>
    </location>
</feature>
<feature type="transmembrane region" description="Helical" evidence="1">
    <location>
        <begin position="482"/>
        <end position="502"/>
    </location>
</feature>
<feature type="transmembrane region" description="Helical" evidence="1">
    <location>
        <begin position="519"/>
        <end position="539"/>
    </location>
</feature>
<feature type="transmembrane region" description="Helical" evidence="1">
    <location>
        <begin position="551"/>
        <end position="571"/>
    </location>
</feature>
<feature type="glycosylation site" description="N-linked (GlcNAc...) asparagine" evidence="2 3">
    <location>
        <position position="174"/>
    </location>
</feature>
<feature type="glycosylation site" description="N-linked (GlcNAc...) asparagine" evidence="1">
    <location>
        <position position="419"/>
    </location>
</feature>
<feature type="sequence conflict" description="In Ref. 2; AAF67014." evidence="4" ref="2">
    <location>
        <position position="15"/>
    </location>
</feature>
<feature type="sequence conflict" description="In Ref. 1; AAF98159." evidence="4" ref="1">
    <original>M</original>
    <variation>I</variation>
    <location>
        <position position="191"/>
    </location>
</feature>
<feature type="sequence conflict" description="In Ref. 2; AAF67014." evidence="4" ref="2">
    <original>KYLDPSFFQ</original>
    <variation>NILIVLFS</variation>
    <location>
        <begin position="210"/>
        <end position="218"/>
    </location>
</feature>
<feature type="sequence conflict" description="In Ref. 8; BAA91362." evidence="4" ref="8">
    <original>M</original>
    <variation>T</variation>
    <location>
        <position position="232"/>
    </location>
</feature>
<feature type="sequence conflict" description="In Ref. 7; AAQ89178." evidence="4" ref="7">
    <original>V</original>
    <variation>R</variation>
    <location>
        <position position="398"/>
    </location>
</feature>
<feature type="sequence conflict" description="In Ref. 8; BAA91362." evidence="4" ref="8">
    <original>F</original>
    <variation>S</variation>
    <location>
        <position position="547"/>
    </location>
</feature>
<comment type="subcellular location">
    <subcellularLocation>
        <location evidence="4">Membrane</location>
        <topology evidence="4">Multi-pass membrane protein</topology>
    </subcellularLocation>
</comment>
<comment type="similarity">
    <text evidence="4">Belongs to the nonaspanin (TM9SF) (TC 9.A.2) family.</text>
</comment>
<comment type="sequence caution" evidence="4">
    <conflict type="frameshift">
        <sequence resource="EMBL-CDS" id="AAF67014"/>
    </conflict>
</comment>
<comment type="sequence caution" evidence="4">
    <conflict type="frameshift">
        <sequence resource="EMBL-CDS" id="AAQ89178"/>
    </conflict>
</comment>
<comment type="sequence caution" evidence="4">
    <conflict type="erroneous initiation">
        <sequence resource="EMBL-CDS" id="BAA91362"/>
    </conflict>
</comment>
<gene>
    <name type="primary">TM9SF3</name>
    <name type="synonym">SMBP</name>
    <name type="ORF">UNQ245/PRO282</name>
</gene>
<dbReference type="EMBL" id="AF269150">
    <property type="protein sequence ID" value="AAF98159.1"/>
    <property type="molecule type" value="mRNA"/>
</dbReference>
<dbReference type="EMBL" id="AF160213">
    <property type="protein sequence ID" value="AAF67014.1"/>
    <property type="status" value="ALT_FRAME"/>
    <property type="molecule type" value="mRNA"/>
</dbReference>
<dbReference type="EMBL" id="AL138765">
    <property type="status" value="NOT_ANNOTATED_CDS"/>
    <property type="molecule type" value="Genomic_DNA"/>
</dbReference>
<dbReference type="EMBL" id="CH471066">
    <property type="protein sequence ID" value="EAW49972.1"/>
    <property type="molecule type" value="Genomic_DNA"/>
</dbReference>
<dbReference type="EMBL" id="CH471066">
    <property type="protein sequence ID" value="EAW49974.1"/>
    <property type="molecule type" value="Genomic_DNA"/>
</dbReference>
<dbReference type="EMBL" id="BC136788">
    <property type="protein sequence ID" value="AAI36789.1"/>
    <property type="molecule type" value="mRNA"/>
</dbReference>
<dbReference type="EMBL" id="BC136789">
    <property type="protein sequence ID" value="AAI36790.1"/>
    <property type="molecule type" value="mRNA"/>
</dbReference>
<dbReference type="EMBL" id="AF116347">
    <property type="protein sequence ID" value="AAF21983.1"/>
    <property type="molecule type" value="mRNA"/>
</dbReference>
<dbReference type="EMBL" id="AY358819">
    <property type="protein sequence ID" value="AAQ89178.1"/>
    <property type="status" value="ALT_FRAME"/>
    <property type="molecule type" value="mRNA"/>
</dbReference>
<dbReference type="EMBL" id="AK000756">
    <property type="protein sequence ID" value="BAA91362.1"/>
    <property type="status" value="ALT_INIT"/>
    <property type="molecule type" value="mRNA"/>
</dbReference>
<dbReference type="CCDS" id="CCDS7450.1"/>
<dbReference type="RefSeq" id="NP_064508.3">
    <property type="nucleotide sequence ID" value="NM_020123.3"/>
</dbReference>
<dbReference type="SMR" id="Q9HD45"/>
<dbReference type="BioGRID" id="121219">
    <property type="interactions" value="176"/>
</dbReference>
<dbReference type="FunCoup" id="Q9HD45">
    <property type="interactions" value="1769"/>
</dbReference>
<dbReference type="IntAct" id="Q9HD45">
    <property type="interactions" value="69"/>
</dbReference>
<dbReference type="MINT" id="Q9HD45"/>
<dbReference type="STRING" id="9606.ENSP00000360184"/>
<dbReference type="GlyConnect" id="1842">
    <property type="glycosylation" value="33 N-Linked glycans (1 site)"/>
</dbReference>
<dbReference type="GlyCosmos" id="Q9HD45">
    <property type="glycosylation" value="2 sites, 32 glycans"/>
</dbReference>
<dbReference type="GlyGen" id="Q9HD45">
    <property type="glycosylation" value="3 sites, 84 N-linked glycans (1 site), 1 O-linked glycan (1 site)"/>
</dbReference>
<dbReference type="iPTMnet" id="Q9HD45"/>
<dbReference type="PhosphoSitePlus" id="Q9HD45"/>
<dbReference type="SwissPalm" id="Q9HD45"/>
<dbReference type="BioMuta" id="TM9SF3"/>
<dbReference type="DMDM" id="13878808"/>
<dbReference type="jPOST" id="Q9HD45"/>
<dbReference type="MassIVE" id="Q9HD45"/>
<dbReference type="PaxDb" id="9606-ENSP00000360184"/>
<dbReference type="PeptideAtlas" id="Q9HD45"/>
<dbReference type="ProteomicsDB" id="81832"/>
<dbReference type="Pumba" id="Q9HD45"/>
<dbReference type="Antibodypedia" id="50246">
    <property type="antibodies" value="81 antibodies from 20 providers"/>
</dbReference>
<dbReference type="DNASU" id="56889"/>
<dbReference type="Ensembl" id="ENST00000371142.9">
    <property type="protein sequence ID" value="ENSP00000360184.4"/>
    <property type="gene ID" value="ENSG00000077147.16"/>
</dbReference>
<dbReference type="GeneID" id="56889"/>
<dbReference type="KEGG" id="hsa:56889"/>
<dbReference type="MANE-Select" id="ENST00000371142.9">
    <property type="protein sequence ID" value="ENSP00000360184.4"/>
    <property type="RefSeq nucleotide sequence ID" value="NM_020123.4"/>
    <property type="RefSeq protein sequence ID" value="NP_064508.3"/>
</dbReference>
<dbReference type="UCSC" id="uc001kmm.5">
    <property type="organism name" value="human"/>
</dbReference>
<dbReference type="AGR" id="HGNC:21529"/>
<dbReference type="CTD" id="56889"/>
<dbReference type="DisGeNET" id="56889"/>
<dbReference type="GeneCards" id="TM9SF3"/>
<dbReference type="HGNC" id="HGNC:21529">
    <property type="gene designation" value="TM9SF3"/>
</dbReference>
<dbReference type="HPA" id="ENSG00000077147">
    <property type="expression patterns" value="Low tissue specificity"/>
</dbReference>
<dbReference type="neXtProt" id="NX_Q9HD45"/>
<dbReference type="OpenTargets" id="ENSG00000077147"/>
<dbReference type="PharmGKB" id="PA144596264"/>
<dbReference type="VEuPathDB" id="HostDB:ENSG00000077147"/>
<dbReference type="eggNOG" id="KOG1277">
    <property type="taxonomic scope" value="Eukaryota"/>
</dbReference>
<dbReference type="GeneTree" id="ENSGT00940000155493"/>
<dbReference type="HOGENOM" id="CLU_010714_0_2_1"/>
<dbReference type="InParanoid" id="Q9HD45"/>
<dbReference type="OMA" id="DAPCRVN"/>
<dbReference type="OrthoDB" id="1666796at2759"/>
<dbReference type="PAN-GO" id="Q9HD45">
    <property type="GO annotations" value="2 GO annotations based on evolutionary models"/>
</dbReference>
<dbReference type="PhylomeDB" id="Q9HD45"/>
<dbReference type="TreeFam" id="TF314271"/>
<dbReference type="PathwayCommons" id="Q9HD45"/>
<dbReference type="SignaLink" id="Q9HD45"/>
<dbReference type="BioGRID-ORCS" id="56889">
    <property type="hits" value="82 hits in 1166 CRISPR screens"/>
</dbReference>
<dbReference type="ChiTaRS" id="TM9SF3">
    <property type="organism name" value="human"/>
</dbReference>
<dbReference type="GenomeRNAi" id="56889"/>
<dbReference type="Pharos" id="Q9HD45">
    <property type="development level" value="Tbio"/>
</dbReference>
<dbReference type="PRO" id="PR:Q9HD45"/>
<dbReference type="Proteomes" id="UP000005640">
    <property type="component" value="Chromosome 10"/>
</dbReference>
<dbReference type="RNAct" id="Q9HD45">
    <property type="molecule type" value="protein"/>
</dbReference>
<dbReference type="Bgee" id="ENSG00000077147">
    <property type="expression patterns" value="Expressed in calcaneal tendon and 204 other cell types or tissues"/>
</dbReference>
<dbReference type="ExpressionAtlas" id="Q9HD45">
    <property type="expression patterns" value="baseline and differential"/>
</dbReference>
<dbReference type="GO" id="GO:0016020">
    <property type="term" value="C:membrane"/>
    <property type="evidence" value="ECO:0000318"/>
    <property type="project" value="GO_Central"/>
</dbReference>
<dbReference type="GO" id="GO:0072657">
    <property type="term" value="P:protein localization to membrane"/>
    <property type="evidence" value="ECO:0000318"/>
    <property type="project" value="GO_Central"/>
</dbReference>
<dbReference type="InterPro" id="IPR004240">
    <property type="entry name" value="EMP70"/>
</dbReference>
<dbReference type="PANTHER" id="PTHR10766:SF41">
    <property type="entry name" value="TRANSMEMBRANE 9 SUPERFAMILY MEMBER 3"/>
    <property type="match status" value="1"/>
</dbReference>
<dbReference type="PANTHER" id="PTHR10766">
    <property type="entry name" value="TRANSMEMBRANE 9 SUPERFAMILY PROTEIN"/>
    <property type="match status" value="1"/>
</dbReference>
<dbReference type="Pfam" id="PF02990">
    <property type="entry name" value="EMP70"/>
    <property type="match status" value="1"/>
</dbReference>
<evidence type="ECO:0000255" key="1"/>
<evidence type="ECO:0000269" key="2">
    <source>
    </source>
</evidence>
<evidence type="ECO:0000269" key="3">
    <source>
    </source>
</evidence>
<evidence type="ECO:0000305" key="4"/>
<protein>
    <recommendedName>
        <fullName>Transmembrane 9 superfamily member 3</fullName>
    </recommendedName>
    <alternativeName>
        <fullName>EP70-P-iso</fullName>
    </alternativeName>
    <alternativeName>
        <fullName>SM-11044-binding protein</fullName>
    </alternativeName>
</protein>
<proteinExistence type="evidence at protein level"/>
<sequence length="589" mass="67888">MRPLPGALGVAAAAALWLLLLLLPRTRADEHEHTYQDKEEVVLWMNTVGPYHNRQETYKYFSLPFCVGSKKSISHYHETLGEALQGVELEFSGLDIKFKDDVMPATYCEIDLDKEKRDAFVYAIKNHYWYQMYIDDLPIWGIVGEADENGEDYYLWTYKKLEIGFNGNRIVDVNLTSEGKVKLVPNTKIQMSYSVKWKKSDVKFEDRFDKYLDPSFFQHRIHWFSIFNSFMMVIFLVGLVSMILMRTLRKDYARYSKEEEMDDMDRDLGDEYGWKQVHGDVFRPSSHPLIFSSLIGSGCQIFAVSLIVIIVAMIEDLYTERGSMLSTAIFVYAATSPVNGYFGGSLYARQGGRRWIKQMFIGAFLIPAMVCGTAFFINFIAIYYHASRAIPFGTMVAVCCICFFVILPLNLVGTILGRNLSGQPNFPCRVNAVPRPIPEKKWFMEPAVIVCLGGILPFGSIFIEMYFIFTSFWAYKIYYVYGFMMLVLVILCIVTVCVTIVCTYFLLNAEDYRWQWTSFLSAASTAIYVYMYSFYYYFFKTKMYGLFQTSFYFGYMAVFSTALGIMCGAIGYMGTSAFVRKIYTNVKID</sequence>
<name>TM9S3_HUMAN</name>